<comment type="catalytic activity">
    <reaction evidence="1">
        <text>shikimate + ATP = 3-phosphoshikimate + ADP + H(+)</text>
        <dbReference type="Rhea" id="RHEA:13121"/>
        <dbReference type="ChEBI" id="CHEBI:15378"/>
        <dbReference type="ChEBI" id="CHEBI:30616"/>
        <dbReference type="ChEBI" id="CHEBI:36208"/>
        <dbReference type="ChEBI" id="CHEBI:145989"/>
        <dbReference type="ChEBI" id="CHEBI:456216"/>
        <dbReference type="EC" id="2.7.1.71"/>
    </reaction>
</comment>
<comment type="pathway">
    <text evidence="1">Metabolic intermediate biosynthesis; chorismate biosynthesis; chorismate from D-erythrose 4-phosphate and phosphoenolpyruvate: step 5/7.</text>
</comment>
<comment type="subcellular location">
    <subcellularLocation>
        <location evidence="1">Cytoplasm</location>
    </subcellularLocation>
</comment>
<comment type="similarity">
    <text evidence="1">Belongs to the GHMP kinase family. Archaeal shikimate kinase subfamily.</text>
</comment>
<name>AROK_METM5</name>
<keyword id="KW-0028">Amino-acid biosynthesis</keyword>
<keyword id="KW-0057">Aromatic amino acid biosynthesis</keyword>
<keyword id="KW-0067">ATP-binding</keyword>
<keyword id="KW-0963">Cytoplasm</keyword>
<keyword id="KW-0418">Kinase</keyword>
<keyword id="KW-0547">Nucleotide-binding</keyword>
<keyword id="KW-0808">Transferase</keyword>
<organism>
    <name type="scientific">Methanococcus maripaludis (strain C5 / ATCC BAA-1333)</name>
    <dbReference type="NCBI Taxonomy" id="402880"/>
    <lineage>
        <taxon>Archaea</taxon>
        <taxon>Methanobacteriati</taxon>
        <taxon>Methanobacteriota</taxon>
        <taxon>Methanomada group</taxon>
        <taxon>Methanococci</taxon>
        <taxon>Methanococcales</taxon>
        <taxon>Methanococcaceae</taxon>
        <taxon>Methanococcus</taxon>
    </lineage>
</organism>
<dbReference type="EC" id="2.7.1.71" evidence="1"/>
<dbReference type="EMBL" id="CP000609">
    <property type="protein sequence ID" value="ABO35652.1"/>
    <property type="molecule type" value="Genomic_DNA"/>
</dbReference>
<dbReference type="RefSeq" id="WP_011869103.1">
    <property type="nucleotide sequence ID" value="NC_009135.1"/>
</dbReference>
<dbReference type="SMR" id="A4FZL8"/>
<dbReference type="STRING" id="402880.MmarC5_1354"/>
<dbReference type="GeneID" id="4928198"/>
<dbReference type="KEGG" id="mmq:MmarC5_1354"/>
<dbReference type="eggNOG" id="arCOG01025">
    <property type="taxonomic scope" value="Archaea"/>
</dbReference>
<dbReference type="HOGENOM" id="CLU_073768_0_0_2"/>
<dbReference type="OrthoDB" id="9602at2157"/>
<dbReference type="UniPathway" id="UPA00053">
    <property type="reaction ID" value="UER00088"/>
</dbReference>
<dbReference type="Proteomes" id="UP000000253">
    <property type="component" value="Chromosome"/>
</dbReference>
<dbReference type="GO" id="GO:0005737">
    <property type="term" value="C:cytoplasm"/>
    <property type="evidence" value="ECO:0007669"/>
    <property type="project" value="UniProtKB-SubCell"/>
</dbReference>
<dbReference type="GO" id="GO:0005524">
    <property type="term" value="F:ATP binding"/>
    <property type="evidence" value="ECO:0007669"/>
    <property type="project" value="UniProtKB-UniRule"/>
</dbReference>
<dbReference type="GO" id="GO:0004765">
    <property type="term" value="F:shikimate kinase activity"/>
    <property type="evidence" value="ECO:0007669"/>
    <property type="project" value="UniProtKB-UniRule"/>
</dbReference>
<dbReference type="GO" id="GO:0008652">
    <property type="term" value="P:amino acid biosynthetic process"/>
    <property type="evidence" value="ECO:0007669"/>
    <property type="project" value="UniProtKB-KW"/>
</dbReference>
<dbReference type="GO" id="GO:0009073">
    <property type="term" value="P:aromatic amino acid family biosynthetic process"/>
    <property type="evidence" value="ECO:0007669"/>
    <property type="project" value="UniProtKB-KW"/>
</dbReference>
<dbReference type="GO" id="GO:0009423">
    <property type="term" value="P:chorismate biosynthetic process"/>
    <property type="evidence" value="ECO:0007669"/>
    <property type="project" value="UniProtKB-UniRule"/>
</dbReference>
<dbReference type="Gene3D" id="3.30.230.10">
    <property type="match status" value="1"/>
</dbReference>
<dbReference type="Gene3D" id="3.30.70.890">
    <property type="entry name" value="GHMP kinase, C-terminal domain"/>
    <property type="match status" value="1"/>
</dbReference>
<dbReference type="HAMAP" id="MF_00370">
    <property type="entry name" value="Shik_kinase_arch"/>
    <property type="match status" value="1"/>
</dbReference>
<dbReference type="InterPro" id="IPR013750">
    <property type="entry name" value="GHMP_kinase_C_dom"/>
</dbReference>
<dbReference type="InterPro" id="IPR036554">
    <property type="entry name" value="GHMP_kinase_C_sf"/>
</dbReference>
<dbReference type="InterPro" id="IPR006204">
    <property type="entry name" value="GHMP_kinase_N_dom"/>
</dbReference>
<dbReference type="InterPro" id="IPR020568">
    <property type="entry name" value="Ribosomal_Su5_D2-typ_SF"/>
</dbReference>
<dbReference type="InterPro" id="IPR014721">
    <property type="entry name" value="Ribsml_uS5_D2-typ_fold_subgr"/>
</dbReference>
<dbReference type="InterPro" id="IPR010189">
    <property type="entry name" value="SK_arc"/>
</dbReference>
<dbReference type="NCBIfam" id="TIGR01920">
    <property type="entry name" value="Shik_kin_archae"/>
    <property type="match status" value="1"/>
</dbReference>
<dbReference type="PANTHER" id="PTHR20861">
    <property type="entry name" value="HOMOSERINE/4-DIPHOSPHOCYTIDYL-2-C-METHYL-D-ERYTHRITOL KINASE"/>
    <property type="match status" value="1"/>
</dbReference>
<dbReference type="PANTHER" id="PTHR20861:SF3">
    <property type="entry name" value="SHIKIMATE KINASE"/>
    <property type="match status" value="1"/>
</dbReference>
<dbReference type="Pfam" id="PF08544">
    <property type="entry name" value="GHMP_kinases_C"/>
    <property type="match status" value="1"/>
</dbReference>
<dbReference type="Pfam" id="PF00288">
    <property type="entry name" value="GHMP_kinases_N"/>
    <property type="match status" value="1"/>
</dbReference>
<dbReference type="PIRSF" id="PIRSF005758">
    <property type="entry name" value="Shikimt_kin_arch"/>
    <property type="match status" value="1"/>
</dbReference>
<dbReference type="SUPFAM" id="SSF55060">
    <property type="entry name" value="GHMP Kinase, C-terminal domain"/>
    <property type="match status" value="1"/>
</dbReference>
<dbReference type="SUPFAM" id="SSF54211">
    <property type="entry name" value="Ribosomal protein S5 domain 2-like"/>
    <property type="match status" value="1"/>
</dbReference>
<sequence>MRCSAVSLGSGTIINAIATGFGSAFGVDLKIKADVELVDNCKKIINGISIDNPTLKPSLVERCVKNVLDHFEVDYSAKISTSGDIPIKSGLSSSSAASNAAVLATIGALGEKVDSDLVLDLAIKSSFEEKLTITGAYDDATASYFGGITVCNNMERKILKKDEFKEDIKVIVLMPEFQKNVDVNRMKLIKDYVEIAFEKCMEGDYYKALFLNGLLYSSALNFPSNISVDALEAGAITAGLSGTGPSYVALCYSEDKKNVENALKKYGNTVITKPSTNGARILY</sequence>
<feature type="chain" id="PRO_1000059934" description="Shikimate kinase">
    <location>
        <begin position="1"/>
        <end position="283"/>
    </location>
</feature>
<feature type="binding site" evidence="1">
    <location>
        <begin position="86"/>
        <end position="96"/>
    </location>
    <ligand>
        <name>ATP</name>
        <dbReference type="ChEBI" id="CHEBI:30616"/>
    </ligand>
</feature>
<reference key="1">
    <citation type="submission" date="2007-03" db="EMBL/GenBank/DDBJ databases">
        <title>Complete sequence of chromosome of Methanococcus maripaludis C5.</title>
        <authorList>
            <consortium name="US DOE Joint Genome Institute"/>
            <person name="Copeland A."/>
            <person name="Lucas S."/>
            <person name="Lapidus A."/>
            <person name="Barry K."/>
            <person name="Glavina del Rio T."/>
            <person name="Dalin E."/>
            <person name="Tice H."/>
            <person name="Pitluck S."/>
            <person name="Chertkov O."/>
            <person name="Brettin T."/>
            <person name="Bruce D."/>
            <person name="Han C."/>
            <person name="Detter J.C."/>
            <person name="Schmutz J."/>
            <person name="Larimer F."/>
            <person name="Land M."/>
            <person name="Hauser L."/>
            <person name="Kyrpides N."/>
            <person name="Mikhailova N."/>
            <person name="Sieprawska-Lupa M."/>
            <person name="Whitman W.B."/>
            <person name="Richardson P."/>
        </authorList>
    </citation>
    <scope>NUCLEOTIDE SEQUENCE [LARGE SCALE GENOMIC DNA]</scope>
    <source>
        <strain>C5 / ATCC BAA-1333</strain>
    </source>
</reference>
<protein>
    <recommendedName>
        <fullName evidence="1">Shikimate kinase</fullName>
        <shortName evidence="1">SK</shortName>
        <ecNumber evidence="1">2.7.1.71</ecNumber>
    </recommendedName>
</protein>
<proteinExistence type="inferred from homology"/>
<gene>
    <name evidence="1" type="primary">aroK</name>
    <name type="ordered locus">MmarC5_1354</name>
</gene>
<evidence type="ECO:0000255" key="1">
    <source>
        <dbReference type="HAMAP-Rule" id="MF_00370"/>
    </source>
</evidence>
<accession>A4FZL8</accession>